<accession>Q7NSJ1</accession>
<evidence type="ECO:0000255" key="1">
    <source>
        <dbReference type="HAMAP-Rule" id="MF_01428"/>
    </source>
</evidence>
<reference key="1">
    <citation type="journal article" date="2003" name="Proc. Natl. Acad. Sci. U.S.A.">
        <title>The complete genome sequence of Chromobacterium violaceum reveals remarkable and exploitable bacterial adaptability.</title>
        <authorList>
            <person name="Vasconcelos A.T.R."/>
            <person name="de Almeida D.F."/>
            <person name="Hungria M."/>
            <person name="Guimaraes C.T."/>
            <person name="Antonio R.V."/>
            <person name="Almeida F.C."/>
            <person name="de Almeida L.G.P."/>
            <person name="de Almeida R."/>
            <person name="Alves-Gomes J.A."/>
            <person name="Andrade E.M."/>
            <person name="Araripe J."/>
            <person name="de Araujo M.F.F."/>
            <person name="Astolfi-Filho S."/>
            <person name="Azevedo V."/>
            <person name="Baptista A.J."/>
            <person name="Bataus L.A.M."/>
            <person name="Batista J.S."/>
            <person name="Belo A."/>
            <person name="van den Berg C."/>
            <person name="Bogo M."/>
            <person name="Bonatto S."/>
            <person name="Bordignon J."/>
            <person name="Brigido M.M."/>
            <person name="Brito C.A."/>
            <person name="Brocchi M."/>
            <person name="Burity H.A."/>
            <person name="Camargo A.A."/>
            <person name="Cardoso D.D.P."/>
            <person name="Carneiro N.P."/>
            <person name="Carraro D.M."/>
            <person name="Carvalho C.M.B."/>
            <person name="Cascardo J.C.M."/>
            <person name="Cavada B.S."/>
            <person name="Chueire L.M.O."/>
            <person name="Creczynski-Pasa T.B."/>
            <person name="Cunha-Junior N.C."/>
            <person name="Fagundes N."/>
            <person name="Falcao C.L."/>
            <person name="Fantinatti F."/>
            <person name="Farias I.P."/>
            <person name="Felipe M.S.S."/>
            <person name="Ferrari L.P."/>
            <person name="Ferro J.A."/>
            <person name="Ferro M.I.T."/>
            <person name="Franco G.R."/>
            <person name="Freitas N.S.A."/>
            <person name="Furlan L.R."/>
            <person name="Gazzinelli R.T."/>
            <person name="Gomes E.A."/>
            <person name="Goncalves P.R."/>
            <person name="Grangeiro T.B."/>
            <person name="Grattapaglia D."/>
            <person name="Grisard E.C."/>
            <person name="Hanna E.S."/>
            <person name="Jardim S.N."/>
            <person name="Laurino J."/>
            <person name="Leoi L.C.T."/>
            <person name="Lima L.F.A."/>
            <person name="Loureiro M.F."/>
            <person name="Lyra M.C.C.P."/>
            <person name="Madeira H.M.F."/>
            <person name="Manfio G.P."/>
            <person name="Maranhao A.Q."/>
            <person name="Martins W.S."/>
            <person name="di Mauro S.M.Z."/>
            <person name="de Medeiros S.R.B."/>
            <person name="Meissner R.V."/>
            <person name="Moreira M.A.M."/>
            <person name="Nascimento F.F."/>
            <person name="Nicolas M.F."/>
            <person name="Oliveira J.G."/>
            <person name="Oliveira S.C."/>
            <person name="Paixao R.F.C."/>
            <person name="Parente J.A."/>
            <person name="Pedrosa F.O."/>
            <person name="Pena S.D.J."/>
            <person name="Pereira J.O."/>
            <person name="Pereira M."/>
            <person name="Pinto L.S.R.C."/>
            <person name="Pinto L.S."/>
            <person name="Porto J.I.R."/>
            <person name="Potrich D.P."/>
            <person name="Ramalho-Neto C.E."/>
            <person name="Reis A.M.M."/>
            <person name="Rigo L.U."/>
            <person name="Rondinelli E."/>
            <person name="Santos E.B.P."/>
            <person name="Santos F.R."/>
            <person name="Schneider M.P.C."/>
            <person name="Seuanez H.N."/>
            <person name="Silva A.M.R."/>
            <person name="da Silva A.L.C."/>
            <person name="Silva D.W."/>
            <person name="Silva R."/>
            <person name="Simoes I.C."/>
            <person name="Simon D."/>
            <person name="Soares C.M.A."/>
            <person name="Soares R.B.A."/>
            <person name="Souza E.M."/>
            <person name="Souza K.R.L."/>
            <person name="Souza R.C."/>
            <person name="Steffens M.B.R."/>
            <person name="Steindel M."/>
            <person name="Teixeira S.R."/>
            <person name="Urmenyi T."/>
            <person name="Vettore A."/>
            <person name="Wassem R."/>
            <person name="Zaha A."/>
            <person name="Simpson A.J.G."/>
        </authorList>
    </citation>
    <scope>NUCLEOTIDE SEQUENCE [LARGE SCALE GENOMIC DNA]</scope>
    <source>
        <strain>ATCC 12472 / DSM 30191 / JCM 1249 / CCUG 213 / NBRC 12614 / NCIMB 9131 / NCTC 9757 / MK</strain>
    </source>
</reference>
<sequence length="298" mass="32637">MSNALYRGRFAPSPTGLLHAGSLSTAIGSYLEARSRGGEWLLRMEDLDPPREVPGAADDILRTLEAFGFEWDGEVVYQSRRHGLYRAALERLIASGRAYACCCTRKEIAATARRGLDGYVYPGTCRNGCPDGREGRAWRLRVDEGEWTAHDRLQGEHRQDLARDIGDFVLLRADGFWAYQLAVVVDDAEQGVTDIVRGADLLVSTPRQLAVYDALGQSAPGYCHLPVLTNAAGEKLSKQTLAPAISTRDAARQLREALAWLGHVPPADCGSLDELWPWAVANWSLSRVPAGPLQLPLS</sequence>
<feature type="chain" id="PRO_0000208292" description="Glutamyl-Q tRNA(Asp) synthetase">
    <location>
        <begin position="1"/>
        <end position="298"/>
    </location>
</feature>
<feature type="short sequence motif" description="'HIGH' region">
    <location>
        <begin position="12"/>
        <end position="22"/>
    </location>
</feature>
<feature type="short sequence motif" description="'KMSKS' region">
    <location>
        <begin position="235"/>
        <end position="239"/>
    </location>
</feature>
<feature type="binding site" evidence="1">
    <location>
        <begin position="9"/>
        <end position="13"/>
    </location>
    <ligand>
        <name>L-glutamate</name>
        <dbReference type="ChEBI" id="CHEBI:29985"/>
    </ligand>
</feature>
<feature type="binding site" evidence="1">
    <location>
        <position position="45"/>
    </location>
    <ligand>
        <name>L-glutamate</name>
        <dbReference type="ChEBI" id="CHEBI:29985"/>
    </ligand>
</feature>
<feature type="binding site" evidence="1">
    <location>
        <position position="101"/>
    </location>
    <ligand>
        <name>Zn(2+)</name>
        <dbReference type="ChEBI" id="CHEBI:29105"/>
    </ligand>
</feature>
<feature type="binding site" evidence="1">
    <location>
        <position position="103"/>
    </location>
    <ligand>
        <name>Zn(2+)</name>
        <dbReference type="ChEBI" id="CHEBI:29105"/>
    </ligand>
</feature>
<feature type="binding site" evidence="1">
    <location>
        <position position="121"/>
    </location>
    <ligand>
        <name>Zn(2+)</name>
        <dbReference type="ChEBI" id="CHEBI:29105"/>
    </ligand>
</feature>
<feature type="binding site" evidence="1">
    <location>
        <position position="125"/>
    </location>
    <ligand>
        <name>Zn(2+)</name>
        <dbReference type="ChEBI" id="CHEBI:29105"/>
    </ligand>
</feature>
<feature type="binding site" evidence="1">
    <location>
        <position position="179"/>
    </location>
    <ligand>
        <name>L-glutamate</name>
        <dbReference type="ChEBI" id="CHEBI:29985"/>
    </ligand>
</feature>
<feature type="binding site" evidence="1">
    <location>
        <position position="197"/>
    </location>
    <ligand>
        <name>L-glutamate</name>
        <dbReference type="ChEBI" id="CHEBI:29985"/>
    </ligand>
</feature>
<feature type="binding site" evidence="1">
    <location>
        <position position="238"/>
    </location>
    <ligand>
        <name>ATP</name>
        <dbReference type="ChEBI" id="CHEBI:30616"/>
    </ligand>
</feature>
<organism>
    <name type="scientific">Chromobacterium violaceum (strain ATCC 12472 / DSM 30191 / JCM 1249 / CCUG 213 / NBRC 12614 / NCIMB 9131 / NCTC 9757 / MK)</name>
    <dbReference type="NCBI Taxonomy" id="243365"/>
    <lineage>
        <taxon>Bacteria</taxon>
        <taxon>Pseudomonadati</taxon>
        <taxon>Pseudomonadota</taxon>
        <taxon>Betaproteobacteria</taxon>
        <taxon>Neisseriales</taxon>
        <taxon>Chromobacteriaceae</taxon>
        <taxon>Chromobacterium</taxon>
    </lineage>
</organism>
<dbReference type="EC" id="6.1.1.-" evidence="1"/>
<dbReference type="EMBL" id="AE016825">
    <property type="protein sequence ID" value="AAQ61096.1"/>
    <property type="molecule type" value="Genomic_DNA"/>
</dbReference>
<dbReference type="RefSeq" id="WP_011136980.1">
    <property type="nucleotide sequence ID" value="NC_005085.1"/>
</dbReference>
<dbReference type="SMR" id="Q7NSJ1"/>
<dbReference type="STRING" id="243365.CV_3433"/>
<dbReference type="GeneID" id="66364654"/>
<dbReference type="KEGG" id="cvi:CV_3433"/>
<dbReference type="eggNOG" id="COG0008">
    <property type="taxonomic scope" value="Bacteria"/>
</dbReference>
<dbReference type="HOGENOM" id="CLU_015768_0_1_4"/>
<dbReference type="OrthoDB" id="9807503at2"/>
<dbReference type="Proteomes" id="UP000001424">
    <property type="component" value="Chromosome"/>
</dbReference>
<dbReference type="GO" id="GO:0005829">
    <property type="term" value="C:cytosol"/>
    <property type="evidence" value="ECO:0007669"/>
    <property type="project" value="TreeGrafter"/>
</dbReference>
<dbReference type="GO" id="GO:0005524">
    <property type="term" value="F:ATP binding"/>
    <property type="evidence" value="ECO:0007669"/>
    <property type="project" value="UniProtKB-KW"/>
</dbReference>
<dbReference type="GO" id="GO:0004818">
    <property type="term" value="F:glutamate-tRNA ligase activity"/>
    <property type="evidence" value="ECO:0007669"/>
    <property type="project" value="TreeGrafter"/>
</dbReference>
<dbReference type="GO" id="GO:0008270">
    <property type="term" value="F:zinc ion binding"/>
    <property type="evidence" value="ECO:0007669"/>
    <property type="project" value="UniProtKB-UniRule"/>
</dbReference>
<dbReference type="GO" id="GO:0006424">
    <property type="term" value="P:glutamyl-tRNA aminoacylation"/>
    <property type="evidence" value="ECO:0007669"/>
    <property type="project" value="InterPro"/>
</dbReference>
<dbReference type="GO" id="GO:0006400">
    <property type="term" value="P:tRNA modification"/>
    <property type="evidence" value="ECO:0007669"/>
    <property type="project" value="InterPro"/>
</dbReference>
<dbReference type="FunFam" id="3.40.50.620:FF:000093">
    <property type="entry name" value="Glutamyl-Q tRNA(Asp) synthetase"/>
    <property type="match status" value="1"/>
</dbReference>
<dbReference type="Gene3D" id="3.40.50.620">
    <property type="entry name" value="HUPs"/>
    <property type="match status" value="1"/>
</dbReference>
<dbReference type="HAMAP" id="MF_01428">
    <property type="entry name" value="Glu_Q_tRNA_synth"/>
    <property type="match status" value="1"/>
</dbReference>
<dbReference type="InterPro" id="IPR022380">
    <property type="entry name" value="Glu-Q_tRNA(Asp)_Synthase"/>
</dbReference>
<dbReference type="InterPro" id="IPR000924">
    <property type="entry name" value="Glu/Gln-tRNA-synth"/>
</dbReference>
<dbReference type="InterPro" id="IPR020058">
    <property type="entry name" value="Glu/Gln-tRNA-synth_Ib_cat-dom"/>
</dbReference>
<dbReference type="InterPro" id="IPR049940">
    <property type="entry name" value="GluQ/Sye"/>
</dbReference>
<dbReference type="InterPro" id="IPR014729">
    <property type="entry name" value="Rossmann-like_a/b/a_fold"/>
</dbReference>
<dbReference type="NCBIfam" id="NF004314">
    <property type="entry name" value="PRK05710.1-3"/>
    <property type="match status" value="1"/>
</dbReference>
<dbReference type="NCBIfam" id="TIGR03838">
    <property type="entry name" value="queuosine_YadB"/>
    <property type="match status" value="1"/>
</dbReference>
<dbReference type="PANTHER" id="PTHR43311">
    <property type="entry name" value="GLUTAMATE--TRNA LIGASE"/>
    <property type="match status" value="1"/>
</dbReference>
<dbReference type="PANTHER" id="PTHR43311:SF1">
    <property type="entry name" value="GLUTAMYL-Q TRNA(ASP) SYNTHETASE"/>
    <property type="match status" value="1"/>
</dbReference>
<dbReference type="Pfam" id="PF00749">
    <property type="entry name" value="tRNA-synt_1c"/>
    <property type="match status" value="1"/>
</dbReference>
<dbReference type="PRINTS" id="PR00987">
    <property type="entry name" value="TRNASYNTHGLU"/>
</dbReference>
<dbReference type="SUPFAM" id="SSF52374">
    <property type="entry name" value="Nucleotidylyl transferase"/>
    <property type="match status" value="1"/>
</dbReference>
<comment type="function">
    <text evidence="1">Catalyzes the tRNA-independent activation of glutamate in presence of ATP and the subsequent transfer of glutamate onto a tRNA(Asp). Glutamate is transferred on the 2-amino-5-(4,5-dihydroxy-2-cyclopenten-1-yl) moiety of the queuosine in the wobble position of the QUC anticodon.</text>
</comment>
<comment type="cofactor">
    <cofactor evidence="1">
        <name>Zn(2+)</name>
        <dbReference type="ChEBI" id="CHEBI:29105"/>
    </cofactor>
    <text evidence="1">Binds 1 zinc ion per subunit.</text>
</comment>
<comment type="similarity">
    <text evidence="1">Belongs to the class-I aminoacyl-tRNA synthetase family. GluQ subfamily.</text>
</comment>
<name>GLUQ_CHRVO</name>
<keyword id="KW-0030">Aminoacyl-tRNA synthetase</keyword>
<keyword id="KW-0067">ATP-binding</keyword>
<keyword id="KW-0436">Ligase</keyword>
<keyword id="KW-0479">Metal-binding</keyword>
<keyword id="KW-0547">Nucleotide-binding</keyword>
<keyword id="KW-1185">Reference proteome</keyword>
<keyword id="KW-0862">Zinc</keyword>
<protein>
    <recommendedName>
        <fullName evidence="1">Glutamyl-Q tRNA(Asp) synthetase</fullName>
        <shortName evidence="1">Glu-Q-RSs</shortName>
        <ecNumber evidence="1">6.1.1.-</ecNumber>
    </recommendedName>
</protein>
<gene>
    <name evidence="1" type="primary">gluQ</name>
    <name type="ordered locus">CV_3433</name>
</gene>
<proteinExistence type="inferred from homology"/>